<proteinExistence type="inferred from homology"/>
<gene>
    <name evidence="1" type="primary">rpiA</name>
    <name type="ordered locus">SE_1911</name>
</gene>
<sequence length="230" mass="25628">MKDAKELKLMTLEDVLSQIENGMTIGIGTGSTIELLIPQIAELIQQKNYTITGVCTSNKTAFLAKELAMNIVDVNDVEKIDLAIDGADEVDSALNLIKGGGGALFREKVIDEMADRFVVVVDESKLVNYLGETFALPVEVDKFNWYQVAKKIERTYDIHVSRRVNEDVPFITDNGNYILDCSLQNRIPAYELHEFLIHLTGVLETGYFLDIADQVIVGTQEGVKILNKET</sequence>
<evidence type="ECO:0000255" key="1">
    <source>
        <dbReference type="HAMAP-Rule" id="MF_00170"/>
    </source>
</evidence>
<keyword id="KW-0413">Isomerase</keyword>
<comment type="function">
    <text evidence="1">Catalyzes the reversible conversion of ribose-5-phosphate to ribulose 5-phosphate.</text>
</comment>
<comment type="catalytic activity">
    <reaction evidence="1">
        <text>aldehydo-D-ribose 5-phosphate = D-ribulose 5-phosphate</text>
        <dbReference type="Rhea" id="RHEA:14657"/>
        <dbReference type="ChEBI" id="CHEBI:58121"/>
        <dbReference type="ChEBI" id="CHEBI:58273"/>
        <dbReference type="EC" id="5.3.1.6"/>
    </reaction>
</comment>
<comment type="pathway">
    <text evidence="1">Carbohydrate degradation; pentose phosphate pathway; D-ribose 5-phosphate from D-ribulose 5-phosphate (non-oxidative stage): step 1/1.</text>
</comment>
<comment type="subunit">
    <text evidence="1">Homodimer.</text>
</comment>
<comment type="similarity">
    <text evidence="1">Belongs to the ribose 5-phosphate isomerase family.</text>
</comment>
<feature type="chain" id="PRO_0000158469" description="Ribose-5-phosphate isomerase A">
    <location>
        <begin position="1"/>
        <end position="230"/>
    </location>
</feature>
<feature type="active site" description="Proton acceptor" evidence="1">
    <location>
        <position position="107"/>
    </location>
</feature>
<feature type="binding site" evidence="1">
    <location>
        <begin position="29"/>
        <end position="32"/>
    </location>
    <ligand>
        <name>substrate</name>
    </ligand>
</feature>
<feature type="binding site" evidence="1">
    <location>
        <begin position="85"/>
        <end position="88"/>
    </location>
    <ligand>
        <name>substrate</name>
    </ligand>
</feature>
<feature type="binding site" evidence="1">
    <location>
        <begin position="98"/>
        <end position="101"/>
    </location>
    <ligand>
        <name>substrate</name>
    </ligand>
</feature>
<feature type="binding site" evidence="1">
    <location>
        <position position="125"/>
    </location>
    <ligand>
        <name>substrate</name>
    </ligand>
</feature>
<protein>
    <recommendedName>
        <fullName evidence="1">Ribose-5-phosphate isomerase A</fullName>
        <ecNumber evidence="1">5.3.1.6</ecNumber>
    </recommendedName>
    <alternativeName>
        <fullName evidence="1">Phosphoriboisomerase A</fullName>
        <shortName evidence="1">PRI</shortName>
    </alternativeName>
</protein>
<organism>
    <name type="scientific">Staphylococcus epidermidis (strain ATCC 12228 / FDA PCI 1200)</name>
    <dbReference type="NCBI Taxonomy" id="176280"/>
    <lineage>
        <taxon>Bacteria</taxon>
        <taxon>Bacillati</taxon>
        <taxon>Bacillota</taxon>
        <taxon>Bacilli</taxon>
        <taxon>Bacillales</taxon>
        <taxon>Staphylococcaceae</taxon>
        <taxon>Staphylococcus</taxon>
    </lineage>
</organism>
<name>RPIA_STAES</name>
<reference key="1">
    <citation type="journal article" date="2003" name="Mol. Microbiol.">
        <title>Genome-based analysis of virulence genes in a non-biofilm-forming Staphylococcus epidermidis strain (ATCC 12228).</title>
        <authorList>
            <person name="Zhang Y.-Q."/>
            <person name="Ren S.-X."/>
            <person name="Li H.-L."/>
            <person name="Wang Y.-X."/>
            <person name="Fu G."/>
            <person name="Yang J."/>
            <person name="Qin Z.-Q."/>
            <person name="Miao Y.-G."/>
            <person name="Wang W.-Y."/>
            <person name="Chen R.-S."/>
            <person name="Shen Y."/>
            <person name="Chen Z."/>
            <person name="Yuan Z.-H."/>
            <person name="Zhao G.-P."/>
            <person name="Qu D."/>
            <person name="Danchin A."/>
            <person name="Wen Y.-M."/>
        </authorList>
    </citation>
    <scope>NUCLEOTIDE SEQUENCE [LARGE SCALE GENOMIC DNA]</scope>
    <source>
        <strain>ATCC 12228 / FDA PCI 1200</strain>
    </source>
</reference>
<dbReference type="EC" id="5.3.1.6" evidence="1"/>
<dbReference type="EMBL" id="AE015929">
    <property type="protein sequence ID" value="AAO05552.1"/>
    <property type="molecule type" value="Genomic_DNA"/>
</dbReference>
<dbReference type="RefSeq" id="NP_765466.1">
    <property type="nucleotide sequence ID" value="NC_004461.1"/>
</dbReference>
<dbReference type="RefSeq" id="WP_001831586.1">
    <property type="nucleotide sequence ID" value="NZ_WBME01000027.1"/>
</dbReference>
<dbReference type="SMR" id="Q8CRC8"/>
<dbReference type="KEGG" id="sep:SE_1911"/>
<dbReference type="PATRIC" id="fig|176280.10.peg.1869"/>
<dbReference type="eggNOG" id="COG0120">
    <property type="taxonomic scope" value="Bacteria"/>
</dbReference>
<dbReference type="HOGENOM" id="CLU_056590_1_1_9"/>
<dbReference type="OrthoDB" id="5870696at2"/>
<dbReference type="UniPathway" id="UPA00115">
    <property type="reaction ID" value="UER00412"/>
</dbReference>
<dbReference type="Proteomes" id="UP000001411">
    <property type="component" value="Chromosome"/>
</dbReference>
<dbReference type="GO" id="GO:0005829">
    <property type="term" value="C:cytosol"/>
    <property type="evidence" value="ECO:0007669"/>
    <property type="project" value="TreeGrafter"/>
</dbReference>
<dbReference type="GO" id="GO:0004751">
    <property type="term" value="F:ribose-5-phosphate isomerase activity"/>
    <property type="evidence" value="ECO:0007669"/>
    <property type="project" value="UniProtKB-UniRule"/>
</dbReference>
<dbReference type="GO" id="GO:0006014">
    <property type="term" value="P:D-ribose metabolic process"/>
    <property type="evidence" value="ECO:0007669"/>
    <property type="project" value="TreeGrafter"/>
</dbReference>
<dbReference type="GO" id="GO:0009052">
    <property type="term" value="P:pentose-phosphate shunt, non-oxidative branch"/>
    <property type="evidence" value="ECO:0007669"/>
    <property type="project" value="UniProtKB-UniRule"/>
</dbReference>
<dbReference type="CDD" id="cd01398">
    <property type="entry name" value="RPI_A"/>
    <property type="match status" value="1"/>
</dbReference>
<dbReference type="FunFam" id="3.40.50.1360:FF:000001">
    <property type="entry name" value="Ribose-5-phosphate isomerase A"/>
    <property type="match status" value="1"/>
</dbReference>
<dbReference type="Gene3D" id="3.30.70.260">
    <property type="match status" value="1"/>
</dbReference>
<dbReference type="Gene3D" id="3.40.50.1360">
    <property type="match status" value="1"/>
</dbReference>
<dbReference type="HAMAP" id="MF_00170">
    <property type="entry name" value="Rib_5P_isom_A"/>
    <property type="match status" value="1"/>
</dbReference>
<dbReference type="InterPro" id="IPR037171">
    <property type="entry name" value="NagB/RpiA_transferase-like"/>
</dbReference>
<dbReference type="InterPro" id="IPR020672">
    <property type="entry name" value="Ribose5P_isomerase_typA_subgr"/>
</dbReference>
<dbReference type="InterPro" id="IPR004788">
    <property type="entry name" value="Ribose5P_isomerase_type_A"/>
</dbReference>
<dbReference type="NCBIfam" id="NF001924">
    <property type="entry name" value="PRK00702.1"/>
    <property type="match status" value="1"/>
</dbReference>
<dbReference type="NCBIfam" id="NF010585">
    <property type="entry name" value="PRK13978.1"/>
    <property type="match status" value="1"/>
</dbReference>
<dbReference type="NCBIfam" id="TIGR00021">
    <property type="entry name" value="rpiA"/>
    <property type="match status" value="1"/>
</dbReference>
<dbReference type="PANTHER" id="PTHR11934">
    <property type="entry name" value="RIBOSE-5-PHOSPHATE ISOMERASE"/>
    <property type="match status" value="1"/>
</dbReference>
<dbReference type="PANTHER" id="PTHR11934:SF0">
    <property type="entry name" value="RIBOSE-5-PHOSPHATE ISOMERASE"/>
    <property type="match status" value="1"/>
</dbReference>
<dbReference type="Pfam" id="PF06026">
    <property type="entry name" value="Rib_5-P_isom_A"/>
    <property type="match status" value="1"/>
</dbReference>
<dbReference type="SUPFAM" id="SSF75445">
    <property type="entry name" value="D-ribose-5-phosphate isomerase (RpiA), lid domain"/>
    <property type="match status" value="1"/>
</dbReference>
<dbReference type="SUPFAM" id="SSF100950">
    <property type="entry name" value="NagB/RpiA/CoA transferase-like"/>
    <property type="match status" value="1"/>
</dbReference>
<accession>Q8CRC8</accession>